<proteinExistence type="inferred from homology"/>
<evidence type="ECO:0000250" key="1"/>
<evidence type="ECO:0000255" key="2">
    <source>
        <dbReference type="PROSITE-ProRule" id="PRU00182"/>
    </source>
</evidence>
<evidence type="ECO:0000256" key="3">
    <source>
        <dbReference type="SAM" id="MobiDB-lite"/>
    </source>
</evidence>
<evidence type="ECO:0000305" key="4"/>
<reference key="1">
    <citation type="journal article" date="2002" name="Proc. Natl. Acad. Sci. U.S.A.">
        <title>Extensive mosaic structure revealed by the complete genome sequence of uropathogenic Escherichia coli.</title>
        <authorList>
            <person name="Welch R.A."/>
            <person name="Burland V."/>
            <person name="Plunkett G. III"/>
            <person name="Redford P."/>
            <person name="Roesch P."/>
            <person name="Rasko D."/>
            <person name="Buckles E.L."/>
            <person name="Liou S.-R."/>
            <person name="Boutin A."/>
            <person name="Hackett J."/>
            <person name="Stroud D."/>
            <person name="Mayhew G.F."/>
            <person name="Rose D.J."/>
            <person name="Zhou S."/>
            <person name="Schwartz D.C."/>
            <person name="Perna N.T."/>
            <person name="Mobley H.L.T."/>
            <person name="Donnenberg M.S."/>
            <person name="Blattner F.R."/>
        </authorList>
    </citation>
    <scope>NUCLEOTIDE SEQUENCE [LARGE SCALE GENOMIC DNA]</scope>
    <source>
        <strain>CFT073 / ATCC 700928 / UPEC</strain>
    </source>
</reference>
<keyword id="KW-0413">Isomerase</keyword>
<keyword id="KW-1185">Reference proteome</keyword>
<keyword id="KW-0694">RNA-binding</keyword>
<keyword id="KW-0698">rRNA processing</keyword>
<gene>
    <name type="primary">rluB</name>
    <name type="ordered locus">c1734</name>
</gene>
<accession>Q8FHV4</accession>
<organism>
    <name type="scientific">Escherichia coli O6:H1 (strain CFT073 / ATCC 700928 / UPEC)</name>
    <dbReference type="NCBI Taxonomy" id="199310"/>
    <lineage>
        <taxon>Bacteria</taxon>
        <taxon>Pseudomonadati</taxon>
        <taxon>Pseudomonadota</taxon>
        <taxon>Gammaproteobacteria</taxon>
        <taxon>Enterobacterales</taxon>
        <taxon>Enterobacteriaceae</taxon>
        <taxon>Escherichia</taxon>
    </lineage>
</organism>
<dbReference type="EC" id="5.4.99.22"/>
<dbReference type="EMBL" id="AE014075">
    <property type="protein sequence ID" value="AAN80200.1"/>
    <property type="molecule type" value="Genomic_DNA"/>
</dbReference>
<dbReference type="RefSeq" id="WP_001291206.1">
    <property type="nucleotide sequence ID" value="NZ_CP051263.1"/>
</dbReference>
<dbReference type="SMR" id="Q8FHV4"/>
<dbReference type="STRING" id="199310.c1734"/>
<dbReference type="GeneID" id="75057275"/>
<dbReference type="KEGG" id="ecc:c1734"/>
<dbReference type="eggNOG" id="COG1187">
    <property type="taxonomic scope" value="Bacteria"/>
</dbReference>
<dbReference type="HOGENOM" id="CLU_024979_1_1_6"/>
<dbReference type="BioCyc" id="ECOL199310:C1734-MONOMER"/>
<dbReference type="Proteomes" id="UP000001410">
    <property type="component" value="Chromosome"/>
</dbReference>
<dbReference type="GO" id="GO:0160139">
    <property type="term" value="F:23S rRNA pseudouridine(2605) synthase activity"/>
    <property type="evidence" value="ECO:0007669"/>
    <property type="project" value="UniProtKB-EC"/>
</dbReference>
<dbReference type="GO" id="GO:0003723">
    <property type="term" value="F:RNA binding"/>
    <property type="evidence" value="ECO:0007669"/>
    <property type="project" value="UniProtKB-KW"/>
</dbReference>
<dbReference type="GO" id="GO:0000455">
    <property type="term" value="P:enzyme-directed rRNA pseudouridine synthesis"/>
    <property type="evidence" value="ECO:0007669"/>
    <property type="project" value="UniProtKB-ARBA"/>
</dbReference>
<dbReference type="CDD" id="cd02556">
    <property type="entry name" value="PseudoU_synth_RluB"/>
    <property type="match status" value="1"/>
</dbReference>
<dbReference type="CDD" id="cd00165">
    <property type="entry name" value="S4"/>
    <property type="match status" value="1"/>
</dbReference>
<dbReference type="FunFam" id="3.10.290.10:FF:000003">
    <property type="entry name" value="Pseudouridine synthase"/>
    <property type="match status" value="1"/>
</dbReference>
<dbReference type="FunFam" id="3.30.2350.10:FF:000002">
    <property type="entry name" value="Pseudouridine synthase"/>
    <property type="match status" value="1"/>
</dbReference>
<dbReference type="FunFam" id="3.30.70.1560:FF:000001">
    <property type="entry name" value="Pseudouridine synthase"/>
    <property type="match status" value="1"/>
</dbReference>
<dbReference type="FunFam" id="3.30.70.580:FF:000009">
    <property type="entry name" value="Pseudouridine synthase"/>
    <property type="match status" value="1"/>
</dbReference>
<dbReference type="Gene3D" id="3.30.2350.10">
    <property type="entry name" value="Pseudouridine synthase"/>
    <property type="match status" value="1"/>
</dbReference>
<dbReference type="Gene3D" id="3.10.290.10">
    <property type="entry name" value="RNA-binding S4 domain"/>
    <property type="match status" value="1"/>
</dbReference>
<dbReference type="InterPro" id="IPR020103">
    <property type="entry name" value="PsdUridine_synth_cat_dom_sf"/>
</dbReference>
<dbReference type="InterPro" id="IPR006145">
    <property type="entry name" value="PsdUridine_synth_RsuA/RluA"/>
</dbReference>
<dbReference type="InterPro" id="IPR000748">
    <property type="entry name" value="PsdUridine_synth_RsuA/RluB/E/F"/>
</dbReference>
<dbReference type="InterPro" id="IPR018496">
    <property type="entry name" value="PsdUridine_synth_RsuA/RluB_CS"/>
</dbReference>
<dbReference type="InterPro" id="IPR050343">
    <property type="entry name" value="RsuA_PseudoU_synthase"/>
</dbReference>
<dbReference type="InterPro" id="IPR002942">
    <property type="entry name" value="S4_RNA-bd"/>
</dbReference>
<dbReference type="InterPro" id="IPR036986">
    <property type="entry name" value="S4_RNA-bd_sf"/>
</dbReference>
<dbReference type="NCBIfam" id="NF007976">
    <property type="entry name" value="PRK10700.1"/>
    <property type="match status" value="1"/>
</dbReference>
<dbReference type="NCBIfam" id="TIGR00093">
    <property type="entry name" value="pseudouridine synthase"/>
    <property type="match status" value="1"/>
</dbReference>
<dbReference type="PANTHER" id="PTHR47683">
    <property type="entry name" value="PSEUDOURIDINE SYNTHASE FAMILY PROTEIN-RELATED"/>
    <property type="match status" value="1"/>
</dbReference>
<dbReference type="PANTHER" id="PTHR47683:SF3">
    <property type="entry name" value="RIBOSOMAL LARGE SUBUNIT PSEUDOURIDINE SYNTHASE B"/>
    <property type="match status" value="1"/>
</dbReference>
<dbReference type="Pfam" id="PF00849">
    <property type="entry name" value="PseudoU_synth_2"/>
    <property type="match status" value="1"/>
</dbReference>
<dbReference type="Pfam" id="PF01479">
    <property type="entry name" value="S4"/>
    <property type="match status" value="1"/>
</dbReference>
<dbReference type="SMART" id="SM00363">
    <property type="entry name" value="S4"/>
    <property type="match status" value="1"/>
</dbReference>
<dbReference type="SUPFAM" id="SSF55174">
    <property type="entry name" value="Alpha-L RNA-binding motif"/>
    <property type="match status" value="1"/>
</dbReference>
<dbReference type="SUPFAM" id="SSF55120">
    <property type="entry name" value="Pseudouridine synthase"/>
    <property type="match status" value="1"/>
</dbReference>
<dbReference type="PROSITE" id="PS01149">
    <property type="entry name" value="PSI_RSU"/>
    <property type="match status" value="1"/>
</dbReference>
<dbReference type="PROSITE" id="PS50889">
    <property type="entry name" value="S4"/>
    <property type="match status" value="1"/>
</dbReference>
<name>RLUB_ECOL6</name>
<protein>
    <recommendedName>
        <fullName>Ribosomal large subunit pseudouridine synthase B</fullName>
        <ecNumber>5.4.99.22</ecNumber>
    </recommendedName>
    <alternativeName>
        <fullName>23S rRNA pseudouridine(2605) synthase</fullName>
    </alternativeName>
    <alternativeName>
        <fullName>rRNA pseudouridylate synthase B</fullName>
    </alternativeName>
    <alternativeName>
        <fullName>rRNA-uridine isomerase B</fullName>
    </alternativeName>
</protein>
<comment type="function">
    <text evidence="1">Responsible for synthesis of pseudouridine from uracil-2605 in 23S ribosomal RNA.</text>
</comment>
<comment type="catalytic activity">
    <reaction>
        <text>uridine(2605) in 23S rRNA = pseudouridine(2605) in 23S rRNA</text>
        <dbReference type="Rhea" id="RHEA:42520"/>
        <dbReference type="Rhea" id="RHEA-COMP:10095"/>
        <dbReference type="Rhea" id="RHEA-COMP:10096"/>
        <dbReference type="ChEBI" id="CHEBI:65314"/>
        <dbReference type="ChEBI" id="CHEBI:65315"/>
        <dbReference type="EC" id="5.4.99.22"/>
    </reaction>
</comment>
<comment type="similarity">
    <text evidence="4">Belongs to the pseudouridine synthase RsuA family.</text>
</comment>
<feature type="chain" id="PRO_0000099984" description="Ribosomal large subunit pseudouridine synthase B">
    <location>
        <begin position="1"/>
        <end position="291"/>
    </location>
</feature>
<feature type="domain" description="S4 RNA-binding" evidence="2">
    <location>
        <begin position="3"/>
        <end position="75"/>
    </location>
</feature>
<feature type="region of interest" description="Disordered" evidence="3">
    <location>
        <begin position="256"/>
        <end position="291"/>
    </location>
</feature>
<feature type="active site" description="Nucleophile" evidence="1">
    <location>
        <position position="110"/>
    </location>
</feature>
<sequence>MSEKLQKVLARAGHGSRREIESIIEAGRVSVDGKIAKLGDRVEITPGLKIRIDGHLISVRESAEQICRVLAYYKPEGELCTRNDPEGRPTVFDRLPKLRGARWIAVGRLDVNTCGLLLFTTDGELANRLMHPSREVEREYAVRVFGQVDDAKLRDLSRGVQLEDGPAAFKTIKFSGGEGINQWYNVTLTEGRNREVRRLWEAVGVQVSRLIRVRYGDIPLPKGLPRGGWTELDLAQTNYLRELVELPPETSSKVAVEKDRRRMKANQIRRAVKRHSQVSGGRRSGGRNNNG</sequence>